<feature type="chain" id="PRO_0000457832" description="Zn(2)-C6 fungal-type transcription factor mpsB">
    <location>
        <begin position="1"/>
        <end position="740"/>
    </location>
</feature>
<feature type="DNA-binding region" description="Zn(2)-C6 fungal-type" evidence="1">
    <location>
        <begin position="25"/>
        <end position="46"/>
    </location>
</feature>
<feature type="region of interest" description="Disordered" evidence="2">
    <location>
        <begin position="625"/>
        <end position="645"/>
    </location>
</feature>
<evidence type="ECO:0000255" key="1">
    <source>
        <dbReference type="PROSITE-ProRule" id="PRU00227"/>
    </source>
</evidence>
<evidence type="ECO:0000256" key="2">
    <source>
        <dbReference type="SAM" id="MobiDB-lite"/>
    </source>
</evidence>
<evidence type="ECO:0000269" key="3">
    <source>
    </source>
</evidence>
<evidence type="ECO:0000303" key="4">
    <source>
    </source>
</evidence>
<evidence type="ECO:0000305" key="5"/>
<comment type="function">
    <text evidence="3">Transcription factor; part of the gene cluster that mediates the biosynthesis of macrophasetins, 3-decalinoyltetramic acids (DTAs) which feature a tetramate (pyrrolidine-2,4-dione) unit connected to a decalin fragment and that have potent bioactivities.</text>
</comment>
<comment type="subcellular location">
    <subcellularLocation>
        <location evidence="1">Nucleus</location>
    </subcellularLocation>
</comment>
<comment type="sequence caution" evidence="5">
    <conflict type="erroneous gene model prediction">
        <sequence resource="EMBL-CDS" id="EKG15178"/>
    </conflict>
</comment>
<keyword id="KW-0238">DNA-binding</keyword>
<keyword id="KW-0479">Metal-binding</keyword>
<keyword id="KW-0539">Nucleus</keyword>
<keyword id="KW-1185">Reference proteome</keyword>
<keyword id="KW-0804">Transcription</keyword>
<keyword id="KW-0805">Transcription regulation</keyword>
<keyword id="KW-0862">Zinc</keyword>
<protein>
    <recommendedName>
        <fullName evidence="4">Zn(2)-C6 fungal-type transcription factor mpsB</fullName>
    </recommendedName>
    <alternativeName>
        <fullName evidence="4">Macrophasetins biosynthesis cluster protein B</fullName>
    </alternativeName>
</protein>
<reference key="1">
    <citation type="journal article" date="2012" name="BMC Genomics">
        <title>Tools to kill: Genome of one of the most destructive plant pathogenic fungi Macrophomina phaseolina.</title>
        <authorList>
            <person name="Islam M.S."/>
            <person name="Haque M.S."/>
            <person name="Islam M.M."/>
            <person name="Emdad E.M."/>
            <person name="Halim A."/>
            <person name="Hossen Q.M.M."/>
            <person name="Hossain M.Z."/>
            <person name="Ahmed B."/>
            <person name="Rahim S."/>
            <person name="Rahman M.S."/>
            <person name="Alam M.M."/>
            <person name="Hou S."/>
            <person name="Wan X."/>
            <person name="Saito J.A."/>
            <person name="Alam M."/>
        </authorList>
    </citation>
    <scope>NUCLEOTIDE SEQUENCE [LARGE SCALE GENOMIC DNA]</scope>
    <source>
        <strain>MS6</strain>
    </source>
</reference>
<reference key="2">
    <citation type="journal article" date="2022" name="Front. Microbiol.">
        <title>Discovery and biosynthesis of macrophasetins from the plant pathogen fungus Macrophomina phaseolina.</title>
        <authorList>
            <person name="Yu C."/>
            <person name="Chen L."/>
            <person name="Gao Y.L."/>
            <person name="Liu J."/>
            <person name="Li P.L."/>
            <person name="Zhang M.L."/>
            <person name="Li Q."/>
            <person name="Zhang H.D."/>
            <person name="Tang M.C."/>
            <person name="Li L."/>
        </authorList>
    </citation>
    <scope>FUNCTION</scope>
</reference>
<name>MPSB_MACPH</name>
<organism>
    <name type="scientific">Macrophomina phaseolina (strain MS6)</name>
    <name type="common">Charcoal rot fungus</name>
    <dbReference type="NCBI Taxonomy" id="1126212"/>
    <lineage>
        <taxon>Eukaryota</taxon>
        <taxon>Fungi</taxon>
        <taxon>Dikarya</taxon>
        <taxon>Ascomycota</taxon>
        <taxon>Pezizomycotina</taxon>
        <taxon>Dothideomycetes</taxon>
        <taxon>Dothideomycetes incertae sedis</taxon>
        <taxon>Botryosphaeriales</taxon>
        <taxon>Botryosphaeriaceae</taxon>
        <taxon>Macrophomina</taxon>
    </lineage>
</organism>
<gene>
    <name evidence="4" type="primary">mpsB</name>
    <name type="ORF">MPH_07625</name>
</gene>
<accession>K2RKH8</accession>
<sequence length="740" mass="82462">MYIVSSKKVSRAPLHVASLCVTLHRLKCDRNQPCSTCSHRGLSFSCTYVASAANSVRKADQSRPSPRPAAGIQDRITQLEGLVLTLMHSVNHKPAPSTGAPESASVLDADLPASFGRISLENDETRYVSGDHWISILDGIAELKDHFEDDNLNAGASPAAGAATAEYQGPKLLFGCHSPTTRESILASLPQRPVTDRLVSKYFNSMDMASSIIHGPTFIREYETFWLAPSETPIMWIGLLFAVIALGTHFQQRETHFIHPSPQRHSVLEAYKDKVIECLVLGKYTKVGPYAIETLMLYFSLEHLPAADTRVDNWILVGIIVRLAMRVGYHRDPSHTPQIKPFQAEMRRRHWATIVQLDLMTSTQVGLPRMVNEAVCDTVEPRNLLDQDFDDQVVDLPPSRPDSDMTSILYLNARNKLMTVFGMITDLTTSTFPTSYRHVMRLDRTLHNTVAAIPSGLQLKALSQSITEPSETILRRIYLDMTFHKARCILHRKYLTAAQVNASYIYSRTSCIDAAVRILQHQDVLFRECQPGGLLHSGNWKITSVLNHDFLLAITILSLDLNGAMELASKSQLIETPMEQQRRENIIRSLNRSYNIWLQSANTSREARKAAEVLRIVLAKAQNSSISTPSHDQDDLDGEAATEATESEYMNSPLTLQPFLACDPGASTAIGTNICTTLDVASPSDYMEDLNDNVTSGVDFDWDNWDSHFRGQNTPNMSTMDLRFPNLDYPTDGRGSDGCI</sequence>
<proteinExistence type="inferred from homology"/>
<dbReference type="EMBL" id="AHHD01000324">
    <property type="protein sequence ID" value="EKG15178.1"/>
    <property type="status" value="ALT_SEQ"/>
    <property type="molecule type" value="Genomic_DNA"/>
</dbReference>
<dbReference type="STRING" id="1126212.K2RKH8"/>
<dbReference type="VEuPathDB" id="FungiDB:MPH_07625"/>
<dbReference type="eggNOG" id="ENOG502SHVI">
    <property type="taxonomic scope" value="Eukaryota"/>
</dbReference>
<dbReference type="HOGENOM" id="CLU_007426_5_0_1"/>
<dbReference type="InParanoid" id="K2RKH8"/>
<dbReference type="OrthoDB" id="4934715at2759"/>
<dbReference type="Proteomes" id="UP000007129">
    <property type="component" value="Unassembled WGS sequence"/>
</dbReference>
<dbReference type="GO" id="GO:0005634">
    <property type="term" value="C:nucleus"/>
    <property type="evidence" value="ECO:0007669"/>
    <property type="project" value="UniProtKB-SubCell"/>
</dbReference>
<dbReference type="GO" id="GO:0003677">
    <property type="term" value="F:DNA binding"/>
    <property type="evidence" value="ECO:0007669"/>
    <property type="project" value="UniProtKB-KW"/>
</dbReference>
<dbReference type="GO" id="GO:0000981">
    <property type="term" value="F:DNA-binding transcription factor activity, RNA polymerase II-specific"/>
    <property type="evidence" value="ECO:0007669"/>
    <property type="project" value="InterPro"/>
</dbReference>
<dbReference type="GO" id="GO:0008270">
    <property type="term" value="F:zinc ion binding"/>
    <property type="evidence" value="ECO:0007669"/>
    <property type="project" value="InterPro"/>
</dbReference>
<dbReference type="GO" id="GO:0006351">
    <property type="term" value="P:DNA-templated transcription"/>
    <property type="evidence" value="ECO:0007669"/>
    <property type="project" value="InterPro"/>
</dbReference>
<dbReference type="CDD" id="cd12148">
    <property type="entry name" value="fungal_TF_MHR"/>
    <property type="match status" value="1"/>
</dbReference>
<dbReference type="Gene3D" id="4.10.240.10">
    <property type="entry name" value="Zn(2)-C6 fungal-type DNA-binding domain"/>
    <property type="match status" value="1"/>
</dbReference>
<dbReference type="InterPro" id="IPR050613">
    <property type="entry name" value="Sec_Metabolite_Reg"/>
</dbReference>
<dbReference type="InterPro" id="IPR007219">
    <property type="entry name" value="Transcription_factor_dom_fun"/>
</dbReference>
<dbReference type="InterPro" id="IPR036864">
    <property type="entry name" value="Zn2-C6_fun-type_DNA-bd_sf"/>
</dbReference>
<dbReference type="InterPro" id="IPR001138">
    <property type="entry name" value="Zn2Cys6_DnaBD"/>
</dbReference>
<dbReference type="PANTHER" id="PTHR31001">
    <property type="entry name" value="UNCHARACTERIZED TRANSCRIPTIONAL REGULATORY PROTEIN"/>
    <property type="match status" value="1"/>
</dbReference>
<dbReference type="PANTHER" id="PTHR31001:SF74">
    <property type="entry name" value="ZN(II)2CYS6 TRANSCRIPTION FACTOR (EUROFUNG)"/>
    <property type="match status" value="1"/>
</dbReference>
<dbReference type="Pfam" id="PF04082">
    <property type="entry name" value="Fungal_trans"/>
    <property type="match status" value="1"/>
</dbReference>
<dbReference type="Pfam" id="PF00172">
    <property type="entry name" value="Zn_clus"/>
    <property type="match status" value="1"/>
</dbReference>
<dbReference type="SMART" id="SM00906">
    <property type="entry name" value="Fungal_trans"/>
    <property type="match status" value="1"/>
</dbReference>